<proteinExistence type="inferred from homology"/>
<accession>Q9CJS8</accession>
<comment type="function">
    <text evidence="1">Catalyzes the condensation reaction of fatty acid synthesis by the addition to an acyl acceptor of two carbons from malonyl-ACP. Catalyzes the first condensation reaction which initiates fatty acid synthesis and may therefore play a role in governing the total rate of fatty acid production. Possesses both acetoacetyl-ACP synthase and acetyl transacylase activities. Its substrate specificity determines the biosynthesis of branched-chain and/or straight-chain of fatty acids.</text>
</comment>
<comment type="catalytic activity">
    <reaction evidence="1">
        <text>malonyl-[ACP] + acetyl-CoA + H(+) = 3-oxobutanoyl-[ACP] + CO2 + CoA</text>
        <dbReference type="Rhea" id="RHEA:12080"/>
        <dbReference type="Rhea" id="RHEA-COMP:9623"/>
        <dbReference type="Rhea" id="RHEA-COMP:9625"/>
        <dbReference type="ChEBI" id="CHEBI:15378"/>
        <dbReference type="ChEBI" id="CHEBI:16526"/>
        <dbReference type="ChEBI" id="CHEBI:57287"/>
        <dbReference type="ChEBI" id="CHEBI:57288"/>
        <dbReference type="ChEBI" id="CHEBI:78449"/>
        <dbReference type="ChEBI" id="CHEBI:78450"/>
        <dbReference type="EC" id="2.3.1.180"/>
    </reaction>
</comment>
<comment type="pathway">
    <text evidence="1">Lipid metabolism; fatty acid biosynthesis.</text>
</comment>
<comment type="subunit">
    <text evidence="1">Homodimer.</text>
</comment>
<comment type="subcellular location">
    <subcellularLocation>
        <location evidence="1">Cytoplasm</location>
    </subcellularLocation>
</comment>
<comment type="domain">
    <text evidence="1">The last Arg residue of the ACP-binding site is essential for the weak association between ACP/AcpP and FabH.</text>
</comment>
<comment type="similarity">
    <text evidence="1">Belongs to the thiolase-like superfamily. FabH family.</text>
</comment>
<evidence type="ECO:0000255" key="1">
    <source>
        <dbReference type="HAMAP-Rule" id="MF_01815"/>
    </source>
</evidence>
<organism>
    <name type="scientific">Pasteurella multocida (strain Pm70)</name>
    <dbReference type="NCBI Taxonomy" id="272843"/>
    <lineage>
        <taxon>Bacteria</taxon>
        <taxon>Pseudomonadati</taxon>
        <taxon>Pseudomonadota</taxon>
        <taxon>Gammaproteobacteria</taxon>
        <taxon>Pasteurellales</taxon>
        <taxon>Pasteurellaceae</taxon>
        <taxon>Pasteurella</taxon>
    </lineage>
</organism>
<dbReference type="EC" id="2.3.1.180" evidence="1"/>
<dbReference type="EMBL" id="AE004439">
    <property type="protein sequence ID" value="AAK03998.1"/>
    <property type="molecule type" value="Genomic_DNA"/>
</dbReference>
<dbReference type="RefSeq" id="WP_005719402.1">
    <property type="nucleotide sequence ID" value="NC_002663.1"/>
</dbReference>
<dbReference type="SMR" id="Q9CJS8"/>
<dbReference type="STRING" id="272843.PM1914"/>
<dbReference type="EnsemblBacteria" id="AAK03998">
    <property type="protein sequence ID" value="AAK03998"/>
    <property type="gene ID" value="PM1914"/>
</dbReference>
<dbReference type="KEGG" id="pmu:PM1914"/>
<dbReference type="PATRIC" id="fig|272843.6.peg.1936"/>
<dbReference type="HOGENOM" id="CLU_039592_3_1_6"/>
<dbReference type="OrthoDB" id="9815506at2"/>
<dbReference type="UniPathway" id="UPA00094"/>
<dbReference type="Proteomes" id="UP000000809">
    <property type="component" value="Chromosome"/>
</dbReference>
<dbReference type="GO" id="GO:0005737">
    <property type="term" value="C:cytoplasm"/>
    <property type="evidence" value="ECO:0007669"/>
    <property type="project" value="UniProtKB-SubCell"/>
</dbReference>
<dbReference type="GO" id="GO:0004315">
    <property type="term" value="F:3-oxoacyl-[acyl-carrier-protein] synthase activity"/>
    <property type="evidence" value="ECO:0007669"/>
    <property type="project" value="InterPro"/>
</dbReference>
<dbReference type="GO" id="GO:0033818">
    <property type="term" value="F:beta-ketoacyl-acyl-carrier-protein synthase III activity"/>
    <property type="evidence" value="ECO:0007669"/>
    <property type="project" value="UniProtKB-UniRule"/>
</dbReference>
<dbReference type="GO" id="GO:0006633">
    <property type="term" value="P:fatty acid biosynthetic process"/>
    <property type="evidence" value="ECO:0007669"/>
    <property type="project" value="UniProtKB-UniRule"/>
</dbReference>
<dbReference type="CDD" id="cd00830">
    <property type="entry name" value="KAS_III"/>
    <property type="match status" value="1"/>
</dbReference>
<dbReference type="FunFam" id="3.40.47.10:FF:000004">
    <property type="entry name" value="3-oxoacyl-[acyl-carrier-protein] synthase 3"/>
    <property type="match status" value="1"/>
</dbReference>
<dbReference type="Gene3D" id="3.40.47.10">
    <property type="match status" value="1"/>
</dbReference>
<dbReference type="HAMAP" id="MF_01815">
    <property type="entry name" value="FabH"/>
    <property type="match status" value="1"/>
</dbReference>
<dbReference type="InterPro" id="IPR013747">
    <property type="entry name" value="ACP_syn_III_C"/>
</dbReference>
<dbReference type="InterPro" id="IPR013751">
    <property type="entry name" value="ACP_syn_III_N"/>
</dbReference>
<dbReference type="InterPro" id="IPR004655">
    <property type="entry name" value="FabH"/>
</dbReference>
<dbReference type="InterPro" id="IPR016039">
    <property type="entry name" value="Thiolase-like"/>
</dbReference>
<dbReference type="NCBIfam" id="TIGR00747">
    <property type="entry name" value="fabH"/>
    <property type="match status" value="1"/>
</dbReference>
<dbReference type="NCBIfam" id="NF006829">
    <property type="entry name" value="PRK09352.1"/>
    <property type="match status" value="1"/>
</dbReference>
<dbReference type="PANTHER" id="PTHR43091">
    <property type="entry name" value="3-OXOACYL-[ACYL-CARRIER-PROTEIN] SYNTHASE"/>
    <property type="match status" value="1"/>
</dbReference>
<dbReference type="PANTHER" id="PTHR43091:SF1">
    <property type="entry name" value="BETA-KETOACYL-[ACYL-CARRIER-PROTEIN] SYNTHASE III, CHLOROPLASTIC"/>
    <property type="match status" value="1"/>
</dbReference>
<dbReference type="Pfam" id="PF08545">
    <property type="entry name" value="ACP_syn_III"/>
    <property type="match status" value="1"/>
</dbReference>
<dbReference type="Pfam" id="PF08541">
    <property type="entry name" value="ACP_syn_III_C"/>
    <property type="match status" value="1"/>
</dbReference>
<dbReference type="SUPFAM" id="SSF53901">
    <property type="entry name" value="Thiolase-like"/>
    <property type="match status" value="1"/>
</dbReference>
<sequence length="317" mass="34034">MYSKILSTGSYLPKHIRTNADLEKMVDTSDEWISERTGIKERRIAEASETVATMGFEAAQNCLAVSPMDVNEIDLIVVATTSATHAFPSTACQIQKMLGIKDAIAFDVAAACSGFVYALTVADQFIRTGKVKKALVIGADLFSRALNPEDRGTIILFGDGAGAVILEASEQAGIISTHLHATGESAEVLTLANQARGIESDPAYLEMQGNATFKIAVRELANVVEETLEANQLDKKDIDWLVPHQANLRIISATAKKLDMDMSQVVVTLDRHGNTSAGSIPSALDEAVRDGRIQRGQLLLLEAFGGGLTWGSALVRF</sequence>
<reference key="1">
    <citation type="journal article" date="2001" name="Proc. Natl. Acad. Sci. U.S.A.">
        <title>Complete genomic sequence of Pasteurella multocida Pm70.</title>
        <authorList>
            <person name="May B.J."/>
            <person name="Zhang Q."/>
            <person name="Li L.L."/>
            <person name="Paustian M.L."/>
            <person name="Whittam T.S."/>
            <person name="Kapur V."/>
        </authorList>
    </citation>
    <scope>NUCLEOTIDE SEQUENCE [LARGE SCALE GENOMIC DNA]</scope>
    <source>
        <strain>Pm70</strain>
    </source>
</reference>
<gene>
    <name evidence="1" type="primary">fabH</name>
    <name type="ordered locus">PM1914</name>
</gene>
<keyword id="KW-0012">Acyltransferase</keyword>
<keyword id="KW-0963">Cytoplasm</keyword>
<keyword id="KW-0275">Fatty acid biosynthesis</keyword>
<keyword id="KW-0276">Fatty acid metabolism</keyword>
<keyword id="KW-0444">Lipid biosynthesis</keyword>
<keyword id="KW-0443">Lipid metabolism</keyword>
<keyword id="KW-0511">Multifunctional enzyme</keyword>
<keyword id="KW-1185">Reference proteome</keyword>
<keyword id="KW-0808">Transferase</keyword>
<feature type="chain" id="PRO_0000110449" description="Beta-ketoacyl-[acyl-carrier-protein] synthase III">
    <location>
        <begin position="1"/>
        <end position="317"/>
    </location>
</feature>
<feature type="region of interest" description="ACP-binding" evidence="1">
    <location>
        <begin position="245"/>
        <end position="249"/>
    </location>
</feature>
<feature type="active site" evidence="1">
    <location>
        <position position="112"/>
    </location>
</feature>
<feature type="active site" evidence="1">
    <location>
        <position position="244"/>
    </location>
</feature>
<feature type="active site" evidence="1">
    <location>
        <position position="274"/>
    </location>
</feature>
<protein>
    <recommendedName>
        <fullName evidence="1">Beta-ketoacyl-[acyl-carrier-protein] synthase III</fullName>
        <shortName evidence="1">Beta-ketoacyl-ACP synthase III</shortName>
        <shortName evidence="1">KAS III</shortName>
        <ecNumber evidence="1">2.3.1.180</ecNumber>
    </recommendedName>
    <alternativeName>
        <fullName evidence="1">3-oxoacyl-[acyl-carrier-protein] synthase 3</fullName>
    </alternativeName>
    <alternativeName>
        <fullName evidence="1">3-oxoacyl-[acyl-carrier-protein] synthase III</fullName>
    </alternativeName>
</protein>
<name>FABH_PASMU</name>